<dbReference type="EMBL" id="K02718">
    <property type="status" value="NOT_ANNOTATED_CDS"/>
    <property type="molecule type" value="Genomic_DNA"/>
</dbReference>
<dbReference type="SMR" id="P0DKA0"/>
<dbReference type="BioGRID" id="4383955">
    <property type="interactions" value="7"/>
</dbReference>
<dbReference type="Proteomes" id="UP000009251">
    <property type="component" value="Segment"/>
</dbReference>
<dbReference type="GO" id="GO:0042025">
    <property type="term" value="C:host cell nucleus"/>
    <property type="evidence" value="ECO:0007669"/>
    <property type="project" value="UniProtKB-SubCell"/>
</dbReference>
<dbReference type="GO" id="GO:0003677">
    <property type="term" value="F:DNA binding"/>
    <property type="evidence" value="ECO:0007669"/>
    <property type="project" value="InterPro"/>
</dbReference>
<dbReference type="GO" id="GO:0003700">
    <property type="term" value="F:DNA-binding transcription factor activity"/>
    <property type="evidence" value="ECO:0007669"/>
    <property type="project" value="InterPro"/>
</dbReference>
<dbReference type="GO" id="GO:0006275">
    <property type="term" value="P:regulation of DNA replication"/>
    <property type="evidence" value="ECO:0007669"/>
    <property type="project" value="InterPro"/>
</dbReference>
<dbReference type="FunFam" id="3.30.70.330:FF:000918">
    <property type="entry name" value="Regulatory protein E2"/>
    <property type="match status" value="1"/>
</dbReference>
<dbReference type="Gene3D" id="3.30.70.330">
    <property type="match status" value="1"/>
</dbReference>
<dbReference type="InterPro" id="IPR035975">
    <property type="entry name" value="E2/EBNA1_C_sf"/>
</dbReference>
<dbReference type="InterPro" id="IPR012677">
    <property type="entry name" value="Nucleotide-bd_a/b_plait_sf"/>
</dbReference>
<dbReference type="InterPro" id="IPR000427">
    <property type="entry name" value="Papillomavirus_E2_C"/>
</dbReference>
<dbReference type="Pfam" id="PF00511">
    <property type="entry name" value="PPV_E2_C"/>
    <property type="match status" value="1"/>
</dbReference>
<dbReference type="SUPFAM" id="SSF54957">
    <property type="entry name" value="Viral DNA-binding domain"/>
    <property type="match status" value="1"/>
</dbReference>
<feature type="chain" id="PRO_0000438740" description="Protein E8^E2C">
    <location>
        <begin position="1"/>
        <end position="177"/>
    </location>
</feature>
<protein>
    <recommendedName>
        <fullName>Protein E8^E2C</fullName>
    </recommendedName>
</protein>
<organism>
    <name type="scientific">Human papillomavirus type 16</name>
    <dbReference type="NCBI Taxonomy" id="333760"/>
    <lineage>
        <taxon>Viruses</taxon>
        <taxon>Monodnaviria</taxon>
        <taxon>Shotokuvirae</taxon>
        <taxon>Cossaviricota</taxon>
        <taxon>Papovaviricetes</taxon>
        <taxon>Zurhausenvirales</taxon>
        <taxon>Papillomaviridae</taxon>
        <taxon>Firstpapillomavirinae</taxon>
        <taxon>Alphapapillomavirus</taxon>
        <taxon>Alphapapillomavirus 9</taxon>
    </lineage>
</organism>
<name>VE8E2_HPV16</name>
<comment type="function">
    <text evidence="1">Plays a role in limiting the replication of viral DNA in keratinocytes. Recruits the host NCoR/SMRT complex to viral replication foci to mediate repression of both viral replication and transcription.</text>
</comment>
<comment type="subunit">
    <text evidence="1">Interacts with host NCoR/SMRT components GPS2, HDAC3, NCOR1, NCOR1, TBL1X and TBLR1.</text>
</comment>
<comment type="subcellular location">
    <subcellularLocation>
        <location evidence="1">Host nucleus</location>
    </subcellularLocation>
</comment>
<comment type="similarity">
    <text evidence="2">Belongs to the papillomaviridae E8^E2C protein family.</text>
</comment>
<organismHost>
    <name type="scientific">Homo sapiens</name>
    <name type="common">Human</name>
    <dbReference type="NCBI Taxonomy" id="9606"/>
</organismHost>
<accession>P0DKA0</accession>
<proteinExistence type="evidence at protein level"/>
<sequence>MAILKWKLSRCYSSNEVSSPEIIRQHLANHPAATHTKAVALGTEETQTTIQRPRSEPDTGNPCHTTKLLHRDSVDSAPILTAFNSSHKGRINCNSNTTPIVHLKGDANTLKCLRYRFKKHCTLYTAVSSTWHWTGHNVKHKSAIVTLTYDSEWQRDQFLSQVKIPKTITVSTGFMSI</sequence>
<keyword id="KW-1048">Host nucleus</keyword>
<keyword id="KW-1185">Reference proteome</keyword>
<evidence type="ECO:0000269" key="1">
    <source>
    </source>
</evidence>
<evidence type="ECO:0000305" key="2"/>
<reference key="1">
    <citation type="journal article" date="1985" name="Virology">
        <title>Human papillomavirus type 16 DNA sequence.</title>
        <authorList>
            <person name="Seedorf K."/>
            <person name="Krammer G."/>
            <person name="Durst M."/>
            <person name="Suhai S."/>
            <person name="Rowekamp W.G."/>
        </authorList>
    </citation>
    <scope>NUCLEOTIDE SEQUENCE [GENOMIC DNA]</scope>
</reference>
<reference key="2">
    <citation type="journal article" date="2014" name="J. Virol.">
        <title>The viral E8^E2C repressor limits productive replication of human papillomavirus 16.</title>
        <authorList>
            <person name="Straub E."/>
            <person name="Dreer M."/>
            <person name="Fertey J."/>
            <person name="Iftner T."/>
            <person name="Stubenrauch F."/>
        </authorList>
    </citation>
    <scope>FUNCTION</scope>
</reference>
<reference key="3">
    <citation type="journal article" date="2016" name="PLoS Pathog.">
        <title>Interaction of NCOR/SMRT repressor complexes with Papillomavirus E8^E2C proteins inhibits viral replication.</title>
        <authorList>
            <person name="Dreer M."/>
            <person name="Fertey J."/>
            <person name="van de Poel S."/>
            <person name="Straub E."/>
            <person name="Madlung J."/>
            <person name="Macek B."/>
            <person name="Iftner T."/>
            <person name="Stubenrauch F."/>
        </authorList>
    </citation>
    <scope>SUBCELLULAR LOCATION</scope>
    <scope>FUNCTION</scope>
    <scope>INTERACTION WITH HOST GPS2; HDAC3; NCOR1; NCOR2; TBL1X AND TBLR1</scope>
</reference>